<feature type="signal peptide" evidence="3">
    <location>
        <begin position="1"/>
        <end position="19"/>
    </location>
</feature>
<feature type="chain" id="PRO_5000795990" description="Lysozyme G" evidence="3">
    <location>
        <begin position="20"/>
        <end position="204"/>
    </location>
</feature>
<feature type="active site" evidence="1">
    <location>
        <position position="92"/>
    </location>
</feature>
<feature type="active site" evidence="1">
    <location>
        <position position="105"/>
    </location>
</feature>
<feature type="disulfide bond" evidence="1">
    <location>
        <begin position="23"/>
        <end position="79"/>
    </location>
</feature>
<feature type="disulfide bond" evidence="1">
    <location>
        <begin position="37"/>
        <end position="48"/>
    </location>
</feature>
<accession>G3XDD8</accession>
<name>LYG_DRONO</name>
<proteinExistence type="evidence at transcript level"/>
<reference evidence="5 6" key="1">
    <citation type="journal article" date="2012" name="Gene">
        <title>Molecular characterization of goose- and chicken-type lysozymes in emu (Dromaius novaehollandiae): evidence for extremely low lysozyme levels in emu egg white.</title>
        <authorList>
            <person name="Maehashi K."/>
            <person name="Matano M."/>
            <person name="Irisawa T."/>
            <person name="Uchino M."/>
            <person name="Kashiwagi Y."/>
            <person name="Watanabe T."/>
        </authorList>
    </citation>
    <scope>NUCLEOTIDE SEQUENCE [GENOMIC DNA / MRNA]</scope>
    <scope>FUNCTION</scope>
    <scope>TISSUE SPECIFICITY</scope>
    <source>
        <tissue evidence="7">Ovary</tissue>
        <tissue evidence="6">Oviduct</tissue>
    </source>
</reference>
<comment type="function">
    <text evidence="4">Has bacteriolytic activity against M.luteus.</text>
</comment>
<comment type="catalytic activity">
    <reaction evidence="2">
        <text>Hydrolysis of (1-&gt;4)-beta-linkages between N-acetylmuramic acid and N-acetyl-D-glucosamine residues in a peptidoglycan and between N-acetyl-D-glucosamine residues in chitodextrins.</text>
        <dbReference type="EC" id="3.2.1.17"/>
    </reaction>
</comment>
<comment type="subcellular location">
    <subcellularLocation>
        <location evidence="2">Secreted</location>
    </subcellularLocation>
</comment>
<comment type="similarity">
    <text evidence="3">Belongs to the glycosyl hydrolase 23 family.</text>
</comment>
<organism>
    <name type="scientific">Dromaius novaehollandiae</name>
    <name type="common">Emu</name>
    <dbReference type="NCBI Taxonomy" id="8790"/>
    <lineage>
        <taxon>Eukaryota</taxon>
        <taxon>Metazoa</taxon>
        <taxon>Chordata</taxon>
        <taxon>Craniata</taxon>
        <taxon>Vertebrata</taxon>
        <taxon>Euteleostomi</taxon>
        <taxon>Archelosauria</taxon>
        <taxon>Archosauria</taxon>
        <taxon>Dinosauria</taxon>
        <taxon>Saurischia</taxon>
        <taxon>Theropoda</taxon>
        <taxon>Coelurosauria</taxon>
        <taxon>Aves</taxon>
        <taxon>Palaeognathae</taxon>
        <taxon>Casuariiformes</taxon>
        <taxon>Dromaiidae</taxon>
        <taxon>Dromaius</taxon>
    </lineage>
</organism>
<protein>
    <recommendedName>
        <fullName evidence="6">Lysozyme G</fullName>
        <ecNumber evidence="2">3.2.1.17</ecNumber>
    </recommendedName>
    <alternativeName>
        <fullName evidence="2">1,4-beta-N-acetylmuramidase</fullName>
    </alternativeName>
</protein>
<sequence length="204" mass="22493">MHLMLVLLGLAALLGTSQSQTGCYGVVNRIDTTGASCETAKPEKLNYCGVAASRMIAERDLRSMDRYKTLIKKVGQKLCVDPAVIAGIISRESHAGKALKNGWGDNGNGFGLMQVDKRSHTPVGEWNGERHLTQGTEILISMIKKIQKKFPRWTKEQQLKGGISAYNAGSGNVRSYERMDIGTTHNDYANDVVARAQYYKQHGY</sequence>
<dbReference type="EC" id="3.2.1.17" evidence="2"/>
<dbReference type="EMBL" id="AB451700">
    <property type="protein sequence ID" value="BAL03618.1"/>
    <property type="molecule type" value="mRNA"/>
</dbReference>
<dbReference type="EMBL" id="AB462632">
    <property type="protein sequence ID" value="BAL03619.1"/>
    <property type="molecule type" value="Genomic_DNA"/>
</dbReference>
<dbReference type="RefSeq" id="XP_025958944.1">
    <property type="nucleotide sequence ID" value="XM_026103159.2"/>
</dbReference>
<dbReference type="SMR" id="G3XDD8"/>
<dbReference type="CAZy" id="GH23">
    <property type="family name" value="Glycoside Hydrolase Family 23"/>
</dbReference>
<dbReference type="Ensembl" id="ENSDNVT00000031733.1">
    <property type="protein sequence ID" value="ENSDNVP00000026237.1"/>
    <property type="gene ID" value="ENSDNVG00000018259.1"/>
</dbReference>
<dbReference type="Ensembl" id="ENSDNVT00000031735.1">
    <property type="protein sequence ID" value="ENSDNVP00000026239.1"/>
    <property type="gene ID" value="ENSDNVG00000018259.1"/>
</dbReference>
<dbReference type="GeneID" id="112984935"/>
<dbReference type="OrthoDB" id="10021790at2759"/>
<dbReference type="Proteomes" id="UP000694423">
    <property type="component" value="Unplaced"/>
</dbReference>
<dbReference type="GO" id="GO:0005576">
    <property type="term" value="C:extracellular region"/>
    <property type="evidence" value="ECO:0007669"/>
    <property type="project" value="UniProtKB-SubCell"/>
</dbReference>
<dbReference type="GO" id="GO:0003796">
    <property type="term" value="F:lysozyme activity"/>
    <property type="evidence" value="ECO:0007669"/>
    <property type="project" value="UniProtKB-EC"/>
</dbReference>
<dbReference type="GO" id="GO:0050830">
    <property type="term" value="P:defense response to Gram-positive bacterium"/>
    <property type="evidence" value="ECO:0007669"/>
    <property type="project" value="TreeGrafter"/>
</dbReference>
<dbReference type="GO" id="GO:0031640">
    <property type="term" value="P:killing of cells of another organism"/>
    <property type="evidence" value="ECO:0007669"/>
    <property type="project" value="UniProtKB-KW"/>
</dbReference>
<dbReference type="GO" id="GO:0009253">
    <property type="term" value="P:peptidoglycan catabolic process"/>
    <property type="evidence" value="ECO:0007669"/>
    <property type="project" value="InterPro"/>
</dbReference>
<dbReference type="CDD" id="cd01021">
    <property type="entry name" value="GEWL"/>
    <property type="match status" value="1"/>
</dbReference>
<dbReference type="FunFam" id="1.10.530.10:FF:000026">
    <property type="entry name" value="Lysozyme g"/>
    <property type="match status" value="1"/>
</dbReference>
<dbReference type="Gene3D" id="1.10.530.10">
    <property type="match status" value="1"/>
</dbReference>
<dbReference type="InterPro" id="IPR002152">
    <property type="entry name" value="Glyco_hydro_23"/>
</dbReference>
<dbReference type="InterPro" id="IPR023346">
    <property type="entry name" value="Lysozyme-like_dom_sf"/>
</dbReference>
<dbReference type="InterPro" id="IPR008258">
    <property type="entry name" value="Transglycosylase_SLT_dom_1"/>
</dbReference>
<dbReference type="PANTHER" id="PTHR31698">
    <property type="entry name" value="LYSOZYME G FAMILY MEMBER"/>
    <property type="match status" value="1"/>
</dbReference>
<dbReference type="PANTHER" id="PTHR31698:SF8">
    <property type="entry name" value="LYSOZYME G-RELATED"/>
    <property type="match status" value="1"/>
</dbReference>
<dbReference type="Pfam" id="PF01464">
    <property type="entry name" value="SLT"/>
    <property type="match status" value="1"/>
</dbReference>
<dbReference type="PIRSF" id="PIRSF001065">
    <property type="entry name" value="Lysozyme_g"/>
    <property type="match status" value="1"/>
</dbReference>
<dbReference type="PRINTS" id="PR00749">
    <property type="entry name" value="LYSOZYMEG"/>
</dbReference>
<dbReference type="SUPFAM" id="SSF53955">
    <property type="entry name" value="Lysozyme-like"/>
    <property type="match status" value="1"/>
</dbReference>
<keyword id="KW-0929">Antimicrobial</keyword>
<keyword id="KW-0081">Bacteriolytic enzyme</keyword>
<keyword id="KW-1015">Disulfide bond</keyword>
<keyword id="KW-0326">Glycosidase</keyword>
<keyword id="KW-0378">Hydrolase</keyword>
<keyword id="KW-0964">Secreted</keyword>
<keyword id="KW-0732">Signal</keyword>
<evidence type="ECO:0000250" key="1">
    <source>
        <dbReference type="UniProtKB" id="P00718"/>
    </source>
</evidence>
<evidence type="ECO:0000250" key="2">
    <source>
        <dbReference type="UniProtKB" id="Q90X99"/>
    </source>
</evidence>
<evidence type="ECO:0000255" key="3"/>
<evidence type="ECO:0000269" key="4">
    <source>
    </source>
</evidence>
<evidence type="ECO:0000305" key="5"/>
<evidence type="ECO:0000312" key="6">
    <source>
        <dbReference type="EMBL" id="BAL03618.1"/>
    </source>
</evidence>
<evidence type="ECO:0000312" key="7">
    <source>
        <dbReference type="EMBL" id="BAL03619.1"/>
    </source>
</evidence>